<proteinExistence type="evidence at protein level"/>
<reference key="1">
    <citation type="journal article" date="2005" name="Science">
        <title>The transcriptional landscape of the mammalian genome.</title>
        <authorList>
            <person name="Carninci P."/>
            <person name="Kasukawa T."/>
            <person name="Katayama S."/>
            <person name="Gough J."/>
            <person name="Frith M.C."/>
            <person name="Maeda N."/>
            <person name="Oyama R."/>
            <person name="Ravasi T."/>
            <person name="Lenhard B."/>
            <person name="Wells C."/>
            <person name="Kodzius R."/>
            <person name="Shimokawa K."/>
            <person name="Bajic V.B."/>
            <person name="Brenner S.E."/>
            <person name="Batalov S."/>
            <person name="Forrest A.R."/>
            <person name="Zavolan M."/>
            <person name="Davis M.J."/>
            <person name="Wilming L.G."/>
            <person name="Aidinis V."/>
            <person name="Allen J.E."/>
            <person name="Ambesi-Impiombato A."/>
            <person name="Apweiler R."/>
            <person name="Aturaliya R.N."/>
            <person name="Bailey T.L."/>
            <person name="Bansal M."/>
            <person name="Baxter L."/>
            <person name="Beisel K.W."/>
            <person name="Bersano T."/>
            <person name="Bono H."/>
            <person name="Chalk A.M."/>
            <person name="Chiu K.P."/>
            <person name="Choudhary V."/>
            <person name="Christoffels A."/>
            <person name="Clutterbuck D.R."/>
            <person name="Crowe M.L."/>
            <person name="Dalla E."/>
            <person name="Dalrymple B.P."/>
            <person name="de Bono B."/>
            <person name="Della Gatta G."/>
            <person name="di Bernardo D."/>
            <person name="Down T."/>
            <person name="Engstrom P."/>
            <person name="Fagiolini M."/>
            <person name="Faulkner G."/>
            <person name="Fletcher C.F."/>
            <person name="Fukushima T."/>
            <person name="Furuno M."/>
            <person name="Futaki S."/>
            <person name="Gariboldi M."/>
            <person name="Georgii-Hemming P."/>
            <person name="Gingeras T.R."/>
            <person name="Gojobori T."/>
            <person name="Green R.E."/>
            <person name="Gustincich S."/>
            <person name="Harbers M."/>
            <person name="Hayashi Y."/>
            <person name="Hensch T.K."/>
            <person name="Hirokawa N."/>
            <person name="Hill D."/>
            <person name="Huminiecki L."/>
            <person name="Iacono M."/>
            <person name="Ikeo K."/>
            <person name="Iwama A."/>
            <person name="Ishikawa T."/>
            <person name="Jakt M."/>
            <person name="Kanapin A."/>
            <person name="Katoh M."/>
            <person name="Kawasawa Y."/>
            <person name="Kelso J."/>
            <person name="Kitamura H."/>
            <person name="Kitano H."/>
            <person name="Kollias G."/>
            <person name="Krishnan S.P."/>
            <person name="Kruger A."/>
            <person name="Kummerfeld S.K."/>
            <person name="Kurochkin I.V."/>
            <person name="Lareau L.F."/>
            <person name="Lazarevic D."/>
            <person name="Lipovich L."/>
            <person name="Liu J."/>
            <person name="Liuni S."/>
            <person name="McWilliam S."/>
            <person name="Madan Babu M."/>
            <person name="Madera M."/>
            <person name="Marchionni L."/>
            <person name="Matsuda H."/>
            <person name="Matsuzawa S."/>
            <person name="Miki H."/>
            <person name="Mignone F."/>
            <person name="Miyake S."/>
            <person name="Morris K."/>
            <person name="Mottagui-Tabar S."/>
            <person name="Mulder N."/>
            <person name="Nakano N."/>
            <person name="Nakauchi H."/>
            <person name="Ng P."/>
            <person name="Nilsson R."/>
            <person name="Nishiguchi S."/>
            <person name="Nishikawa S."/>
            <person name="Nori F."/>
            <person name="Ohara O."/>
            <person name="Okazaki Y."/>
            <person name="Orlando V."/>
            <person name="Pang K.C."/>
            <person name="Pavan W.J."/>
            <person name="Pavesi G."/>
            <person name="Pesole G."/>
            <person name="Petrovsky N."/>
            <person name="Piazza S."/>
            <person name="Reed J."/>
            <person name="Reid J.F."/>
            <person name="Ring B.Z."/>
            <person name="Ringwald M."/>
            <person name="Rost B."/>
            <person name="Ruan Y."/>
            <person name="Salzberg S.L."/>
            <person name="Sandelin A."/>
            <person name="Schneider C."/>
            <person name="Schoenbach C."/>
            <person name="Sekiguchi K."/>
            <person name="Semple C.A."/>
            <person name="Seno S."/>
            <person name="Sessa L."/>
            <person name="Sheng Y."/>
            <person name="Shibata Y."/>
            <person name="Shimada H."/>
            <person name="Shimada K."/>
            <person name="Silva D."/>
            <person name="Sinclair B."/>
            <person name="Sperling S."/>
            <person name="Stupka E."/>
            <person name="Sugiura K."/>
            <person name="Sultana R."/>
            <person name="Takenaka Y."/>
            <person name="Taki K."/>
            <person name="Tammoja K."/>
            <person name="Tan S.L."/>
            <person name="Tang S."/>
            <person name="Taylor M.S."/>
            <person name="Tegner J."/>
            <person name="Teichmann S.A."/>
            <person name="Ueda H.R."/>
            <person name="van Nimwegen E."/>
            <person name="Verardo R."/>
            <person name="Wei C.L."/>
            <person name="Yagi K."/>
            <person name="Yamanishi H."/>
            <person name="Zabarovsky E."/>
            <person name="Zhu S."/>
            <person name="Zimmer A."/>
            <person name="Hide W."/>
            <person name="Bult C."/>
            <person name="Grimmond S.M."/>
            <person name="Teasdale R.D."/>
            <person name="Liu E.T."/>
            <person name="Brusic V."/>
            <person name="Quackenbush J."/>
            <person name="Wahlestedt C."/>
            <person name="Mattick J.S."/>
            <person name="Hume D.A."/>
            <person name="Kai C."/>
            <person name="Sasaki D."/>
            <person name="Tomaru Y."/>
            <person name="Fukuda S."/>
            <person name="Kanamori-Katayama M."/>
            <person name="Suzuki M."/>
            <person name="Aoki J."/>
            <person name="Arakawa T."/>
            <person name="Iida J."/>
            <person name="Imamura K."/>
            <person name="Itoh M."/>
            <person name="Kato T."/>
            <person name="Kawaji H."/>
            <person name="Kawagashira N."/>
            <person name="Kawashima T."/>
            <person name="Kojima M."/>
            <person name="Kondo S."/>
            <person name="Konno H."/>
            <person name="Nakano K."/>
            <person name="Ninomiya N."/>
            <person name="Nishio T."/>
            <person name="Okada M."/>
            <person name="Plessy C."/>
            <person name="Shibata K."/>
            <person name="Shiraki T."/>
            <person name="Suzuki S."/>
            <person name="Tagami M."/>
            <person name="Waki K."/>
            <person name="Watahiki A."/>
            <person name="Okamura-Oho Y."/>
            <person name="Suzuki H."/>
            <person name="Kawai J."/>
            <person name="Hayashizaki Y."/>
        </authorList>
    </citation>
    <scope>NUCLEOTIDE SEQUENCE [LARGE SCALE MRNA] (ISOFORMS 1 AND 2)</scope>
    <source>
        <strain>C57BL/6J</strain>
        <strain>NOD</strain>
        <tissue>Skin</tissue>
    </source>
</reference>
<reference key="2">
    <citation type="journal article" date="2004" name="Genome Res.">
        <title>The status, quality, and expansion of the NIH full-length cDNA project: the Mammalian Gene Collection (MGC).</title>
        <authorList>
            <consortium name="The MGC Project Team"/>
        </authorList>
    </citation>
    <scope>NUCLEOTIDE SEQUENCE [LARGE SCALE MRNA] (ISOFORM 1)</scope>
    <source>
        <strain>129</strain>
        <strain>FVB/N</strain>
        <tissue>Kidney</tissue>
        <tissue>Mammary tumor</tissue>
    </source>
</reference>
<reference key="3">
    <citation type="journal article" date="2005" name="Neuron">
        <title>Loss of the dystonia-associated protein torsinA selectively disrupts the neuronal nuclear envelope.</title>
        <authorList>
            <person name="Goodchild R.E."/>
            <person name="Kim C.E."/>
            <person name="Dauer W.T."/>
        </authorList>
    </citation>
    <scope>DEVELOPMENTAL STAGE</scope>
    <scope>INTERACTION WITH TOR1AIP1</scope>
</reference>
<reference key="4">
    <citation type="journal article" date="2010" name="Hum. Mol. Genet.">
        <title>Relative tissue expression of homologous torsinB correlates with the neuronal specific importance of DYT1 dystonia-associated torsinA.</title>
        <authorList>
            <person name="Jungwirth M."/>
            <person name="Dear M.L."/>
            <person name="Brown P."/>
            <person name="Holbrook K."/>
            <person name="Goodchild R."/>
        </authorList>
    </citation>
    <scope>TISSUE SPECIFICITY</scope>
    <scope>SUBCELLULAR LOCATION</scope>
    <scope>GLYCOSYLATION</scope>
    <scope>SUBUNIT</scope>
    <scope>DEVELOPMENTAL STAGE</scope>
    <scope>MUTAGENESIS OF GLU-162</scope>
</reference>
<evidence type="ECO:0000255" key="1"/>
<evidence type="ECO:0000269" key="2">
    <source>
    </source>
</evidence>
<evidence type="ECO:0000269" key="3">
    <source>
    </source>
</evidence>
<evidence type="ECO:0000303" key="4">
    <source>
    </source>
</evidence>
<evidence type="ECO:0000305" key="5"/>
<organism>
    <name type="scientific">Mus musculus</name>
    <name type="common">Mouse</name>
    <dbReference type="NCBI Taxonomy" id="10090"/>
    <lineage>
        <taxon>Eukaryota</taxon>
        <taxon>Metazoa</taxon>
        <taxon>Chordata</taxon>
        <taxon>Craniata</taxon>
        <taxon>Vertebrata</taxon>
        <taxon>Euteleostomi</taxon>
        <taxon>Mammalia</taxon>
        <taxon>Eutheria</taxon>
        <taxon>Euarchontoglires</taxon>
        <taxon>Glires</taxon>
        <taxon>Rodentia</taxon>
        <taxon>Myomorpha</taxon>
        <taxon>Muroidea</taxon>
        <taxon>Muridae</taxon>
        <taxon>Murinae</taxon>
        <taxon>Mus</taxon>
        <taxon>Mus</taxon>
    </lineage>
</organism>
<gene>
    <name type="primary">Tor2a</name>
</gene>
<protein>
    <recommendedName>
        <fullName>Torsin-2A</fullName>
    </recommendedName>
    <alternativeName>
        <fullName>Torsin family 2 member A</fullName>
    </alternativeName>
</protein>
<keyword id="KW-0025">Alternative splicing</keyword>
<keyword id="KW-0067">ATP-binding</keyword>
<keyword id="KW-0256">Endoplasmic reticulum</keyword>
<keyword id="KW-0325">Glycoprotein</keyword>
<keyword id="KW-0547">Nucleotide-binding</keyword>
<keyword id="KW-1185">Reference proteome</keyword>
<keyword id="KW-0732">Signal</keyword>
<comment type="subunit">
    <text evidence="2 3">Homohexamer. Interacts with TOR1AIP1.</text>
</comment>
<comment type="subcellular location">
    <subcellularLocation>
        <location evidence="3">Endoplasmic reticulum lumen</location>
    </subcellularLocation>
</comment>
<comment type="alternative products">
    <event type="alternative splicing"/>
    <isoform>
        <id>Q8R1J9-1</id>
        <name>1</name>
        <sequence type="displayed"/>
    </isoform>
    <isoform>
        <id>Q8R1J9-2</id>
        <name>2</name>
        <sequence type="described" ref="VSP_017705"/>
    </isoform>
    <isoform>
        <id>P0C7W3-1</id>
        <name>3</name>
        <sequence type="external"/>
    </isoform>
</comment>
<comment type="tissue specificity">
    <text evidence="3">Expressed at similar levels in liver, muscle and brain (at protein level).</text>
</comment>
<comment type="developmental stage">
    <text evidence="2 3">At 16 dpc, widely expressed in all tissues tested.</text>
</comment>
<comment type="PTM">
    <text evidence="3">N-glycosylated.</text>
</comment>
<comment type="similarity">
    <text evidence="5">Belongs to the ClpA/ClpB family. Torsin subfamily.</text>
</comment>
<name>TOR2A_MOUSE</name>
<dbReference type="EMBL" id="AK003976">
    <property type="protein sequence ID" value="BAE43155.1"/>
    <property type="molecule type" value="mRNA"/>
</dbReference>
<dbReference type="EMBL" id="AK162719">
    <property type="protein sequence ID" value="BAE37036.1"/>
    <property type="molecule type" value="mRNA"/>
</dbReference>
<dbReference type="EMBL" id="AK170979">
    <property type="protein sequence ID" value="BAE42156.1"/>
    <property type="molecule type" value="mRNA"/>
</dbReference>
<dbReference type="EMBL" id="AK171247">
    <property type="protein sequence ID" value="BAE42340.1"/>
    <property type="molecule type" value="mRNA"/>
</dbReference>
<dbReference type="EMBL" id="BC023085">
    <property type="protein sequence ID" value="AAH23085.1"/>
    <property type="molecule type" value="mRNA"/>
</dbReference>
<dbReference type="EMBL" id="BC024469">
    <property type="protein sequence ID" value="AAH24469.1"/>
    <property type="molecule type" value="mRNA"/>
</dbReference>
<dbReference type="EMBL" id="BC003466">
    <property type="protein sequence ID" value="AAH03466.1"/>
    <property type="molecule type" value="mRNA"/>
</dbReference>
<dbReference type="CCDS" id="CCDS15929.1">
    <molecule id="Q8R1J9-1"/>
</dbReference>
<dbReference type="RefSeq" id="NP_001399456.1">
    <molecule id="Q8R1J9-2"/>
    <property type="nucleotide sequence ID" value="NM_001412527.1"/>
</dbReference>
<dbReference type="RefSeq" id="NP_001399458.1">
    <molecule id="Q8R1J9-2"/>
    <property type="nucleotide sequence ID" value="NM_001412529.1"/>
</dbReference>
<dbReference type="RefSeq" id="NP_001399459.1">
    <molecule id="Q8R1J9-2"/>
    <property type="nucleotide sequence ID" value="NM_001412530.1"/>
</dbReference>
<dbReference type="RefSeq" id="NP_001399460.1">
    <molecule id="Q8R1J9-2"/>
    <property type="nucleotide sequence ID" value="NM_001412531.1"/>
</dbReference>
<dbReference type="RefSeq" id="NP_001399461.1">
    <molecule id="Q8R1J9-2"/>
    <property type="nucleotide sequence ID" value="NM_001412532.1"/>
</dbReference>
<dbReference type="RefSeq" id="NP_001399464.1">
    <molecule id="Q8R1J9-2"/>
    <property type="nucleotide sequence ID" value="NM_001412535.1"/>
</dbReference>
<dbReference type="RefSeq" id="NP_690013.1">
    <molecule id="Q8R1J9-1"/>
    <property type="nucleotide sequence ID" value="NM_152800.4"/>
</dbReference>
<dbReference type="SMR" id="Q8R1J9"/>
<dbReference type="BioGRID" id="206010">
    <property type="interactions" value="2"/>
</dbReference>
<dbReference type="FunCoup" id="Q8R1J9">
    <property type="interactions" value="890"/>
</dbReference>
<dbReference type="STRING" id="10090.ENSMUSP00000009707"/>
<dbReference type="GlyCosmos" id="Q8R1J9">
    <property type="glycosylation" value="1 site, No reported glycans"/>
</dbReference>
<dbReference type="GlyGen" id="Q8R1J9">
    <property type="glycosylation" value="1 site, 2 N-linked glycans (1 site)"/>
</dbReference>
<dbReference type="PhosphoSitePlus" id="Q8R1J9"/>
<dbReference type="PaxDb" id="10090-ENSMUSP00000009707"/>
<dbReference type="PeptideAtlas" id="Q8R1J9"/>
<dbReference type="ProteomicsDB" id="259158">
    <molecule id="Q8R1J9-1"/>
</dbReference>
<dbReference type="ProteomicsDB" id="259159">
    <molecule id="Q8R1J9-2"/>
</dbReference>
<dbReference type="Pumba" id="Q8R1J9"/>
<dbReference type="Antibodypedia" id="30786">
    <property type="antibodies" value="135 antibodies from 22 providers"/>
</dbReference>
<dbReference type="DNASU" id="30933"/>
<dbReference type="Ensembl" id="ENSMUST00000009707.14">
    <molecule id="Q8R1J9-1"/>
    <property type="protein sequence ID" value="ENSMUSP00000009707.8"/>
    <property type="gene ID" value="ENSMUSG00000009563.17"/>
</dbReference>
<dbReference type="GeneID" id="30933"/>
<dbReference type="KEGG" id="mmu:30933"/>
<dbReference type="UCSC" id="uc008jgs.2">
    <molecule id="Q8R1J9-2"/>
    <property type="organism name" value="mouse"/>
</dbReference>
<dbReference type="UCSC" id="uc008jgt.2">
    <molecule id="Q8R1J9-1"/>
    <property type="organism name" value="mouse"/>
</dbReference>
<dbReference type="AGR" id="MGI:1353596"/>
<dbReference type="CTD" id="27433"/>
<dbReference type="MGI" id="MGI:1353596">
    <property type="gene designation" value="Tor2a"/>
</dbReference>
<dbReference type="VEuPathDB" id="HostDB:ENSMUSG00000009563"/>
<dbReference type="eggNOG" id="KOG2170">
    <property type="taxonomic scope" value="Eukaryota"/>
</dbReference>
<dbReference type="GeneTree" id="ENSGT00950000182888"/>
<dbReference type="HOGENOM" id="CLU_053537_0_0_1"/>
<dbReference type="InParanoid" id="Q8R1J9"/>
<dbReference type="OMA" id="CECDFKP"/>
<dbReference type="OrthoDB" id="19623at2759"/>
<dbReference type="PhylomeDB" id="Q8R1J9"/>
<dbReference type="TreeFam" id="TF314941"/>
<dbReference type="BioGRID-ORCS" id="30933">
    <property type="hits" value="1 hit in 79 CRISPR screens"/>
</dbReference>
<dbReference type="ChiTaRS" id="Tor2a">
    <property type="organism name" value="mouse"/>
</dbReference>
<dbReference type="Proteomes" id="UP000000589">
    <property type="component" value="Chromosome 2"/>
</dbReference>
<dbReference type="RNAct" id="Q8R1J9">
    <property type="molecule type" value="protein"/>
</dbReference>
<dbReference type="Bgee" id="ENSMUSG00000009563">
    <property type="expression patterns" value="Expressed in lacrimal gland and 247 other cell types or tissues"/>
</dbReference>
<dbReference type="ExpressionAtlas" id="Q8R1J9">
    <property type="expression patterns" value="baseline and differential"/>
</dbReference>
<dbReference type="GO" id="GO:0005788">
    <property type="term" value="C:endoplasmic reticulum lumen"/>
    <property type="evidence" value="ECO:0000314"/>
    <property type="project" value="MGI"/>
</dbReference>
<dbReference type="GO" id="GO:0005524">
    <property type="term" value="F:ATP binding"/>
    <property type="evidence" value="ECO:0007669"/>
    <property type="project" value="UniProtKB-KW"/>
</dbReference>
<dbReference type="GO" id="GO:0016887">
    <property type="term" value="F:ATP hydrolysis activity"/>
    <property type="evidence" value="ECO:0007669"/>
    <property type="project" value="InterPro"/>
</dbReference>
<dbReference type="GO" id="GO:0042802">
    <property type="term" value="F:identical protein binding"/>
    <property type="evidence" value="ECO:0000353"/>
    <property type="project" value="MGI"/>
</dbReference>
<dbReference type="GO" id="GO:0051085">
    <property type="term" value="P:chaperone cofactor-dependent protein refolding"/>
    <property type="evidence" value="ECO:0007669"/>
    <property type="project" value="InterPro"/>
</dbReference>
<dbReference type="FunFam" id="3.40.50.300:FF:001014">
    <property type="entry name" value="Torsin"/>
    <property type="match status" value="1"/>
</dbReference>
<dbReference type="Gene3D" id="3.40.50.300">
    <property type="entry name" value="P-loop containing nucleotide triphosphate hydrolases"/>
    <property type="match status" value="1"/>
</dbReference>
<dbReference type="InterPro" id="IPR001270">
    <property type="entry name" value="ClpA/B"/>
</dbReference>
<dbReference type="InterPro" id="IPR027417">
    <property type="entry name" value="P-loop_NTPase"/>
</dbReference>
<dbReference type="InterPro" id="IPR049337">
    <property type="entry name" value="TOR1A_C"/>
</dbReference>
<dbReference type="InterPro" id="IPR010448">
    <property type="entry name" value="Torsin"/>
</dbReference>
<dbReference type="InterPro" id="IPR017378">
    <property type="entry name" value="Torsin_1/2"/>
</dbReference>
<dbReference type="PANTHER" id="PTHR10760">
    <property type="entry name" value="TORSIN"/>
    <property type="match status" value="1"/>
</dbReference>
<dbReference type="PANTHER" id="PTHR10760:SF4">
    <property type="entry name" value="TORSIN-2A"/>
    <property type="match status" value="1"/>
</dbReference>
<dbReference type="Pfam" id="PF21376">
    <property type="entry name" value="TOR1A_C"/>
    <property type="match status" value="1"/>
</dbReference>
<dbReference type="Pfam" id="PF06309">
    <property type="entry name" value="Torsin"/>
    <property type="match status" value="1"/>
</dbReference>
<dbReference type="PIRSF" id="PIRSF038079">
    <property type="entry name" value="Torsin_2A"/>
    <property type="match status" value="1"/>
</dbReference>
<dbReference type="PRINTS" id="PR00300">
    <property type="entry name" value="CLPPROTEASEA"/>
</dbReference>
<dbReference type="SUPFAM" id="SSF52540">
    <property type="entry name" value="P-loop containing nucleoside triphosphate hydrolases"/>
    <property type="match status" value="1"/>
</dbReference>
<accession>Q8R1J9</accession>
<accession>Q3TBH0</accession>
<accession>Q3TC01</accession>
<accession>Q3V4D1</accession>
<accession>Q8R5B5</accession>
<feature type="signal peptide" evidence="1">
    <location>
        <begin position="1"/>
        <end position="26"/>
    </location>
</feature>
<feature type="chain" id="PRO_0000228830" description="Torsin-2A">
    <location>
        <begin position="27"/>
        <end position="321"/>
    </location>
</feature>
<feature type="binding site" evidence="1">
    <location>
        <begin position="93"/>
        <end position="100"/>
    </location>
    <ligand>
        <name>ATP</name>
        <dbReference type="ChEBI" id="CHEBI:30616"/>
    </ligand>
</feature>
<feature type="glycosylation site" description="N-linked (GlcNAc...) asparagine" evidence="1">
    <location>
        <position position="149"/>
    </location>
</feature>
<feature type="splice variant" id="VSP_017705" description="In isoform 2." evidence="4">
    <location>
        <begin position="1"/>
        <end position="162"/>
    </location>
</feature>
<feature type="mutagenesis site" description="Localizes in the nuclear envelope." evidence="3">
    <original>E</original>
    <variation>Q</variation>
    <location>
        <position position="162"/>
    </location>
</feature>
<sequence>MAVARHGYRPWGSILGLLGLALAAAAAWDVASLRCTFGSFCECDFWPDLPGLECDLAQHLAGQHLAKALVVKSLKAFVQDPAPSKPLVLSLHGWTGTGKSYVSSLLAQHLFRDGLRSPHVHHFSPIIHFPHPSRTEQYKKELKSWVQGNLTACGRSLFLFDEMDKLPPGLMEVLQPFLGPSWVVYGTNYRKAIFIFISNAGGEQINQVALEAWRSHRDREEISLQEVEPVISRAVMDNPQHGFWRSGIMEEHLLDAVVPFLPLQRHHVRHCVLNELAQLGLEPSEEVVQAVLDSTTYFPEVEQLFSSNGCKTVASRLTFFL</sequence>